<accession>A8AZM0</accession>
<evidence type="ECO:0000255" key="1">
    <source>
        <dbReference type="HAMAP-Rule" id="MF_01331"/>
    </source>
</evidence>
<evidence type="ECO:0000305" key="2"/>
<feature type="chain" id="PRO_1000086575" description="Large ribosomal subunit protein uL22">
    <location>
        <begin position="1"/>
        <end position="114"/>
    </location>
</feature>
<gene>
    <name evidence="1" type="primary">rplV</name>
    <name type="ordered locus">SGO_1980</name>
</gene>
<reference key="1">
    <citation type="journal article" date="2007" name="J. Bacteriol.">
        <title>Genome-wide transcriptional changes in Streptococcus gordonii in response to competence signaling peptide.</title>
        <authorList>
            <person name="Vickerman M.M."/>
            <person name="Iobst S."/>
            <person name="Jesionowski A.M."/>
            <person name="Gill S.R."/>
        </authorList>
    </citation>
    <scope>NUCLEOTIDE SEQUENCE [LARGE SCALE GENOMIC DNA]</scope>
    <source>
        <strain>Challis / ATCC 35105 / BCRC 15272 / CH1 / DL1 / V288</strain>
    </source>
</reference>
<comment type="function">
    <text evidence="1">This protein binds specifically to 23S rRNA; its binding is stimulated by other ribosomal proteins, e.g. L4, L17, and L20. It is important during the early stages of 50S assembly. It makes multiple contacts with different domains of the 23S rRNA in the assembled 50S subunit and ribosome (By similarity).</text>
</comment>
<comment type="function">
    <text evidence="1">The globular domain of the protein is located near the polypeptide exit tunnel on the outside of the subunit, while an extended beta-hairpin is found that lines the wall of the exit tunnel in the center of the 70S ribosome.</text>
</comment>
<comment type="subunit">
    <text evidence="1">Part of the 50S ribosomal subunit.</text>
</comment>
<comment type="similarity">
    <text evidence="1">Belongs to the universal ribosomal protein uL22 family.</text>
</comment>
<dbReference type="EMBL" id="CP000725">
    <property type="protein sequence ID" value="ABV10160.1"/>
    <property type="molecule type" value="Genomic_DNA"/>
</dbReference>
<dbReference type="RefSeq" id="WP_008809906.1">
    <property type="nucleotide sequence ID" value="NC_009785.1"/>
</dbReference>
<dbReference type="SMR" id="A8AZM0"/>
<dbReference type="STRING" id="467705.SGO_1980"/>
<dbReference type="GeneID" id="93786847"/>
<dbReference type="KEGG" id="sgo:SGO_1980"/>
<dbReference type="eggNOG" id="COG0091">
    <property type="taxonomic scope" value="Bacteria"/>
</dbReference>
<dbReference type="HOGENOM" id="CLU_083987_3_3_9"/>
<dbReference type="Proteomes" id="UP000001131">
    <property type="component" value="Chromosome"/>
</dbReference>
<dbReference type="GO" id="GO:0022625">
    <property type="term" value="C:cytosolic large ribosomal subunit"/>
    <property type="evidence" value="ECO:0007669"/>
    <property type="project" value="TreeGrafter"/>
</dbReference>
<dbReference type="GO" id="GO:0019843">
    <property type="term" value="F:rRNA binding"/>
    <property type="evidence" value="ECO:0007669"/>
    <property type="project" value="UniProtKB-UniRule"/>
</dbReference>
<dbReference type="GO" id="GO:0003735">
    <property type="term" value="F:structural constituent of ribosome"/>
    <property type="evidence" value="ECO:0007669"/>
    <property type="project" value="InterPro"/>
</dbReference>
<dbReference type="GO" id="GO:0006412">
    <property type="term" value="P:translation"/>
    <property type="evidence" value="ECO:0007669"/>
    <property type="project" value="UniProtKB-UniRule"/>
</dbReference>
<dbReference type="CDD" id="cd00336">
    <property type="entry name" value="Ribosomal_L22"/>
    <property type="match status" value="1"/>
</dbReference>
<dbReference type="FunFam" id="3.90.470.10:FF:000001">
    <property type="entry name" value="50S ribosomal protein L22"/>
    <property type="match status" value="1"/>
</dbReference>
<dbReference type="Gene3D" id="3.90.470.10">
    <property type="entry name" value="Ribosomal protein L22/L17"/>
    <property type="match status" value="1"/>
</dbReference>
<dbReference type="HAMAP" id="MF_01331_B">
    <property type="entry name" value="Ribosomal_uL22_B"/>
    <property type="match status" value="1"/>
</dbReference>
<dbReference type="InterPro" id="IPR001063">
    <property type="entry name" value="Ribosomal_uL22"/>
</dbReference>
<dbReference type="InterPro" id="IPR005727">
    <property type="entry name" value="Ribosomal_uL22_bac/chlpt-type"/>
</dbReference>
<dbReference type="InterPro" id="IPR047867">
    <property type="entry name" value="Ribosomal_uL22_bac/org-type"/>
</dbReference>
<dbReference type="InterPro" id="IPR018260">
    <property type="entry name" value="Ribosomal_uL22_CS"/>
</dbReference>
<dbReference type="InterPro" id="IPR036394">
    <property type="entry name" value="Ribosomal_uL22_sf"/>
</dbReference>
<dbReference type="NCBIfam" id="TIGR01044">
    <property type="entry name" value="rplV_bact"/>
    <property type="match status" value="1"/>
</dbReference>
<dbReference type="PANTHER" id="PTHR13501">
    <property type="entry name" value="CHLOROPLAST 50S RIBOSOMAL PROTEIN L22-RELATED"/>
    <property type="match status" value="1"/>
</dbReference>
<dbReference type="PANTHER" id="PTHR13501:SF8">
    <property type="entry name" value="LARGE RIBOSOMAL SUBUNIT PROTEIN UL22M"/>
    <property type="match status" value="1"/>
</dbReference>
<dbReference type="Pfam" id="PF00237">
    <property type="entry name" value="Ribosomal_L22"/>
    <property type="match status" value="1"/>
</dbReference>
<dbReference type="SUPFAM" id="SSF54843">
    <property type="entry name" value="Ribosomal protein L22"/>
    <property type="match status" value="1"/>
</dbReference>
<dbReference type="PROSITE" id="PS00464">
    <property type="entry name" value="RIBOSOMAL_L22"/>
    <property type="match status" value="1"/>
</dbReference>
<sequence>MAEITSAKAMARTVRVSPRKSRLILDNIRGKNVADAIAILKFTPNKAAGIIEKVLNSAIANAENNFGLEKANLVVSEAFANEGPTMKRFRPRAKGSASPINKRTSHITVVVAEK</sequence>
<organism>
    <name type="scientific">Streptococcus gordonii (strain Challis / ATCC 35105 / BCRC 15272 / CH1 / DL1 / V288)</name>
    <dbReference type="NCBI Taxonomy" id="467705"/>
    <lineage>
        <taxon>Bacteria</taxon>
        <taxon>Bacillati</taxon>
        <taxon>Bacillota</taxon>
        <taxon>Bacilli</taxon>
        <taxon>Lactobacillales</taxon>
        <taxon>Streptococcaceae</taxon>
        <taxon>Streptococcus</taxon>
    </lineage>
</organism>
<keyword id="KW-1185">Reference proteome</keyword>
<keyword id="KW-0687">Ribonucleoprotein</keyword>
<keyword id="KW-0689">Ribosomal protein</keyword>
<keyword id="KW-0694">RNA-binding</keyword>
<keyword id="KW-0699">rRNA-binding</keyword>
<proteinExistence type="inferred from homology"/>
<name>RL22_STRGC</name>
<protein>
    <recommendedName>
        <fullName evidence="1">Large ribosomal subunit protein uL22</fullName>
    </recommendedName>
    <alternativeName>
        <fullName evidence="2">50S ribosomal protein L22</fullName>
    </alternativeName>
</protein>